<feature type="chain" id="PRO_0000117287" description="Exportin-2">
    <location>
        <begin position="1"/>
        <end position="971"/>
    </location>
</feature>
<feature type="domain" description="Importin N-terminal" evidence="1">
    <location>
        <begin position="29"/>
        <end position="102"/>
    </location>
</feature>
<feature type="modified residue" description="N-acetylmethionine" evidence="8 13 15 16">
    <location>
        <position position="1"/>
    </location>
</feature>
<feature type="modified residue" description="Phosphoserine" evidence="17">
    <location>
        <position position="112"/>
    </location>
</feature>
<feature type="modified residue" description="N6-acetyllysine" evidence="14">
    <location>
        <position position="574"/>
    </location>
</feature>
<feature type="modified residue" description="N6-acetyllysine" evidence="14">
    <location>
        <position position="824"/>
    </location>
</feature>
<feature type="modified residue" description="Phosphoserine" evidence="17 18">
    <location>
        <position position="931"/>
    </location>
</feature>
<feature type="splice variant" id="VSP_001222" description="In isoform 2." evidence="9">
    <original>ATIELC</original>
    <variation>VWNASW</variation>
    <location>
        <begin position="190"/>
        <end position="195"/>
    </location>
</feature>
<feature type="splice variant" id="VSP_001223" description="In isoform 2." evidence="9">
    <location>
        <begin position="196"/>
        <end position="971"/>
    </location>
</feature>
<feature type="splice variant" id="VSP_047203" description="In isoform 4." evidence="10">
    <location>
        <begin position="257"/>
        <end position="312"/>
    </location>
</feature>
<feature type="splice variant" id="VSP_001224" description="In isoform 3." evidence="9">
    <original>VPS</original>
    <variation>TYF</variation>
    <location>
        <begin position="943"/>
        <end position="945"/>
    </location>
</feature>
<feature type="splice variant" id="VSP_001225" description="In isoform 3." evidence="9">
    <location>
        <begin position="946"/>
        <end position="971"/>
    </location>
</feature>
<feature type="sequence variant" id="VAR_029327" description="In dbSNP:rs2229042.">
    <original>I</original>
    <variation>V</variation>
    <location>
        <position position="754"/>
    </location>
</feature>
<feature type="sequence variant" id="VAR_036558" description="In a colorectal cancer sample; somatic mutation." evidence="3">
    <original>C</original>
    <variation>F</variation>
    <location>
        <position position="842"/>
    </location>
</feature>
<feature type="sequence variant" id="VAR_048836" description="In dbSNP:rs3505.">
    <original>V</original>
    <variation>L</variation>
    <location>
        <position position="968"/>
    </location>
</feature>
<feature type="sequence conflict" description="In Ref. 1; AAC50367 and 2; AAC35008." evidence="12" ref="1 2">
    <original>FED</original>
    <variation>WEG</variation>
    <location>
        <begin position="231"/>
        <end position="233"/>
    </location>
</feature>
<feature type="sequence conflict" description="In Ref. 1; AAC50367 and 2; AAC35008." evidence="12" ref="1 2">
    <original>E</original>
    <variation>G</variation>
    <location>
        <position position="514"/>
    </location>
</feature>
<feature type="sequence conflict" description="In Ref. 3; ABO15009." evidence="12" ref="3">
    <original>A</original>
    <variation>T</variation>
    <location>
        <position position="538"/>
    </location>
</feature>
<feature type="sequence conflict" description="In Ref. 1; AAC50367." evidence="12" ref="1">
    <original>K</original>
    <variation>N</variation>
    <location>
        <position position="848"/>
    </location>
</feature>
<feature type="sequence conflict" description="In Ref. 1; AAC50367." evidence="12" ref="1">
    <original>K</original>
    <variation>M</variation>
    <location>
        <position position="934"/>
    </location>
</feature>
<comment type="function">
    <text evidence="6">Export receptor for importin-alpha. Mediates importin-alpha re-export from the nucleus to the cytoplasm after import substrates (cargos) have been released into the nucleoplasm. In the nucleus binds cooperatively to importin-alpha and to the GTPase Ran in its active GTP-bound form. Docking of this trimeric complex to the nuclear pore complex (NPC) is mediated through binding to nucleoporins. Upon transit of a nuclear export complex into the cytoplasm, disassembling of the complex and hydrolysis of Ran-GTP to Ran-GDP (induced by RANBP1 and RANGAP1, respectively) cause release of the importin-alpha from the export receptor. CSE1L/XPO2 then return to the nuclear compartment and mediate another round of transport. The directionality of nuclear export is thought to be conferred by an asymmetric distribution of the GTP- and GDP-bound forms of Ran between the cytoplasm and nucleus.</text>
</comment>
<comment type="subunit">
    <text evidence="4 6 7">Found in a complex with CSE1L/XPO2, Ran and KPNA2 (PubMed:9323134, PubMed:9786944). Binds with high affinity to importin-alpha only in the presence of RanGTP. The complex is dissociated by the combined action of RanBP1 and RanGAP1 (PubMed:9323134). Interacts with CFTR (PubMed:20933420).</text>
</comment>
<comment type="interaction">
    <interactant intactId="EBI-286709">
        <id>P55060</id>
    </interactant>
    <interactant intactId="EBI-12820341">
        <id>Q96JQ5</id>
        <label>MS4A4A</label>
    </interactant>
    <organismsDiffer>false</organismsDiffer>
    <experiments>2</experiments>
</comment>
<comment type="interaction">
    <interactant intactId="EBI-286709">
        <id>P55060</id>
    </interactant>
    <interactant intactId="EBI-10235794">
        <id>Q15077</id>
        <label>P2RY6</label>
    </interactant>
    <organismsDiffer>false</organismsDiffer>
    <experiments>2</experiments>
</comment>
<comment type="interaction">
    <interactant intactId="EBI-286709">
        <id>P55060</id>
    </interactant>
    <interactant intactId="EBI-519169">
        <id>Q9Y275</id>
        <label>TNFSF13B</label>
    </interactant>
    <organismsDiffer>false</organismsDiffer>
    <experiments>2</experiments>
</comment>
<comment type="interaction">
    <interactant intactId="EBI-286709">
        <id>P55060</id>
    </interactant>
    <interactant intactId="EBI-366083">
        <id>P04637</id>
        <label>TP53</label>
    </interactant>
    <organismsDiffer>false</organismsDiffer>
    <experiments>5</experiments>
</comment>
<comment type="interaction">
    <interactant intactId="EBI-286709">
        <id>P55060</id>
    </interactant>
    <interactant intactId="EBI-4401271">
        <id>Q9H1C4</id>
        <label>UNC93B1</label>
    </interactant>
    <organismsDiffer>false</organismsDiffer>
    <experiments>2</experiments>
</comment>
<comment type="interaction">
    <interactant intactId="EBI-286709">
        <id>P55060</id>
    </interactant>
    <interactant intactId="EBI-714589">
        <id>Q9BTM9</id>
        <label>URM1</label>
    </interactant>
    <organismsDiffer>false</organismsDiffer>
    <experiments>2</experiments>
</comment>
<comment type="interaction">
    <interactant intactId="EBI-286709">
        <id>P55060</id>
    </interactant>
    <interactant intactId="EBI-10191195">
        <id>O95183</id>
        <label>VAMP5</label>
    </interactant>
    <organismsDiffer>false</organismsDiffer>
    <experiments>2</experiments>
</comment>
<comment type="subcellular location">
    <subcellularLocation>
        <location evidence="6">Cytoplasm</location>
    </subcellularLocation>
    <subcellularLocation>
        <location evidence="6">Nucleus</location>
    </subcellularLocation>
    <text evidence="6">Shuttles between the nucleus and the cytoplasm.</text>
</comment>
<comment type="alternative products">
    <event type="alternative splicing"/>
    <isoform>
        <id>P55060-1</id>
        <name>1</name>
        <name>A</name>
        <sequence type="displayed"/>
    </isoform>
    <isoform>
        <id>P55060-2</id>
        <name>2</name>
        <sequence type="described" ref="VSP_001222 VSP_001223"/>
    </isoform>
    <isoform>
        <id>P55060-3</id>
        <name>3</name>
        <sequence type="described" ref="VSP_001224 VSP_001225"/>
    </isoform>
    <isoform>
        <id>P55060-4</id>
        <name>4</name>
        <sequence type="described" ref="VSP_047203"/>
    </isoform>
</comment>
<comment type="tissue specificity">
    <text evidence="2 5">Detected in brain, placenta, ovary, testis and trachea (at protein level) (PubMed:10331944). Widely expressed (PubMed:10331944). Highly expressed in testis and in proliferating cells (PubMed:10331944, PubMed:7479798).</text>
</comment>
<comment type="similarity">
    <text evidence="12">Belongs to the XPO2/CSE1 family.</text>
</comment>
<comment type="online information" name="Atlas of Genetics and Cytogenetics in Oncology and Haematology">
    <link uri="https://atlasgeneticsoncology.org/gene/40159/CSE1L"/>
</comment>
<keyword id="KW-0007">Acetylation</keyword>
<keyword id="KW-0025">Alternative splicing</keyword>
<keyword id="KW-0963">Cytoplasm</keyword>
<keyword id="KW-0903">Direct protein sequencing</keyword>
<keyword id="KW-0539">Nucleus</keyword>
<keyword id="KW-0597">Phosphoprotein</keyword>
<keyword id="KW-0653">Protein transport</keyword>
<keyword id="KW-1267">Proteomics identification</keyword>
<keyword id="KW-1185">Reference proteome</keyword>
<keyword id="KW-0813">Transport</keyword>
<evidence type="ECO:0000255" key="1">
    <source>
        <dbReference type="PROSITE-ProRule" id="PRU00115"/>
    </source>
</evidence>
<evidence type="ECO:0000269" key="2">
    <source>
    </source>
</evidence>
<evidence type="ECO:0000269" key="3">
    <source>
    </source>
</evidence>
<evidence type="ECO:0000269" key="4">
    <source>
    </source>
</evidence>
<evidence type="ECO:0000269" key="5">
    <source>
    </source>
</evidence>
<evidence type="ECO:0000269" key="6">
    <source>
    </source>
</evidence>
<evidence type="ECO:0000269" key="7">
    <source>
    </source>
</evidence>
<evidence type="ECO:0000269" key="8">
    <source ref="8"/>
</evidence>
<evidence type="ECO:0000303" key="9">
    <source>
    </source>
</evidence>
<evidence type="ECO:0000303" key="10">
    <source>
    </source>
</evidence>
<evidence type="ECO:0000303" key="11">
    <source>
    </source>
</evidence>
<evidence type="ECO:0000305" key="12"/>
<evidence type="ECO:0007744" key="13">
    <source>
    </source>
</evidence>
<evidence type="ECO:0007744" key="14">
    <source>
    </source>
</evidence>
<evidence type="ECO:0007744" key="15">
    <source>
    </source>
</evidence>
<evidence type="ECO:0007744" key="16">
    <source>
    </source>
</evidence>
<evidence type="ECO:0007744" key="17">
    <source>
    </source>
</evidence>
<evidence type="ECO:0007744" key="18">
    <source>
    </source>
</evidence>
<gene>
    <name type="primary">CSE1L</name>
    <name evidence="11" type="synonym">CAS</name>
    <name type="synonym">XPO2</name>
</gene>
<sequence>MELSDANLQTLTEYLKKTLDPDPAIRRPAEKFLESVEGNQNYPLLLLTLLEKSQDNVIKVCASVTFKNYIKRNWRIVEDEPNKICEADRVAIKANIVHLMLSSPEQIQKQLSDAISIIGREDFPQKWPDLLTEMVNRFQSGDFHVINGVLRTAHSLFKRYRHEFKSNELWTEIKLVLDAFALPLTNLFKATIELCSTHANDASALRILFSSLILISKLFYSLNFQDLPEFFEDNMETWMNNFHTLLTLDNKLLQTDDEEEAGLLELLKSQICDNAALYAQKYDEEFQRYLPRFVTAIWNLLVTTGQEVKYDLLVSNAIQFLASVCERPHYKNLFEDQNTLTSICEKVIVPNMEFRAADEEAFEDNSEEYIRRDLEGSDIDTRRRAACDLVRGLCKFFEGPVTGIFSGYVNSMLQEYAKNPSVNWKHKDAAIYLVTSLASKAQTQKHGITQANELVNLTEFFVNHILPDLKSANVNEFPVLKADGIKYIMIFRNQVPKEHLLVSIPLLINHLQAESIVVHTYAAHALERLFTMRGPNNATLFTAAEIAPFVEILLTNLFKALTLPGSSENEYIMKAIMRSFSLLQEAIIPYIPTLITQLTQKLLAVSKNPSKPHFNHYMFEAICLSIRITCKANPAAVVNFEEALFLVFTEILQNDVQEFIPYVFQVMSLLLETHKNDIPSSYMALFPHLLQPVLWERTGNIPALVRLLQAFLERGSNTIASAAADKIPGLLGVFQKLIASKANDHQGFYLLNSIIEHMPPESVDQYRKQIFILLFQRLQNSKTTKFIKSFLVFINLYCIKYGALALQEIFDGIQPKMFGMVLEKIIIPEIQKVSGNVEKKICAVGITKLLTECPPMMDTEYTKLWTPLLQSLIGLFELPEDDTIPDEEHFIDIEDTPGYQTAFSQLAFAGKKEHDPVGQMVNNPKIHLAQSLHKLSTACPGRVPSMVSTSLNAEALQYLQGYLQAASVTLL</sequence>
<reference key="1">
    <citation type="journal article" date="1995" name="Proc. Natl. Acad. Sci. U.S.A.">
        <title>Cloning and characterization of a cellular apoptosis susceptibility gene, the human homologue to the yeast chromosome segregation gene CSE1.</title>
        <authorList>
            <person name="Brinkmann U."/>
            <person name="Brinkmann E."/>
            <person name="Gallo M."/>
            <person name="Pastan I."/>
        </authorList>
    </citation>
    <scope>NUCLEOTIDE SEQUENCE [MRNA] (ISOFORM 1)</scope>
    <scope>TISSUE SPECIFICITY</scope>
    <source>
        <tissue>Placenta</tissue>
    </source>
</reference>
<reference key="2">
    <citation type="journal article" date="1999" name="Genomics">
        <title>Tissue-specific alternative splicing of the CSE1L/CAS (cellular apoptosis susceptibility) gene.</title>
        <authorList>
            <person name="Brinkmann U."/>
            <person name="Brinkmann E."/>
            <person name="Bera T.K."/>
            <person name="Wellmann A."/>
            <person name="Pastan I."/>
        </authorList>
    </citation>
    <scope>NUCLEOTIDE SEQUENCE [GENOMIC DNA / MRNA] (ISOFORMS 1; 2 AND 3)</scope>
    <scope>TISSUE SPECIFICITY</scope>
    <source>
        <tissue>Brain</tissue>
    </source>
</reference>
<reference key="3">
    <citation type="journal article" date="2001" name="Mol. Cell Biol. Res. Commun.">
        <title>IRF-1-mediated CAS expression enhances interferon-gamma-induced apoptosis of HT-29 colon adenocarcinoma cells.</title>
        <authorList>
            <person name="Jiang M.C."/>
            <person name="Lin T.L."/>
            <person name="Lee T.L."/>
            <person name="Huang H.T."/>
            <person name="Lin C.L."/>
            <person name="Liao C.F."/>
        </authorList>
    </citation>
    <scope>NUCLEOTIDE SEQUENCE [MRNA] (ISOFORM 4)</scope>
</reference>
<reference key="4">
    <citation type="journal article" date="2004" name="Nat. Genet.">
        <title>Complete sequencing and characterization of 21,243 full-length human cDNAs.</title>
        <authorList>
            <person name="Ota T."/>
            <person name="Suzuki Y."/>
            <person name="Nishikawa T."/>
            <person name="Otsuki T."/>
            <person name="Sugiyama T."/>
            <person name="Irie R."/>
            <person name="Wakamatsu A."/>
            <person name="Hayashi K."/>
            <person name="Sato H."/>
            <person name="Nagai K."/>
            <person name="Kimura K."/>
            <person name="Makita H."/>
            <person name="Sekine M."/>
            <person name="Obayashi M."/>
            <person name="Nishi T."/>
            <person name="Shibahara T."/>
            <person name="Tanaka T."/>
            <person name="Ishii S."/>
            <person name="Yamamoto J."/>
            <person name="Saito K."/>
            <person name="Kawai Y."/>
            <person name="Isono Y."/>
            <person name="Nakamura Y."/>
            <person name="Nagahari K."/>
            <person name="Murakami K."/>
            <person name="Yasuda T."/>
            <person name="Iwayanagi T."/>
            <person name="Wagatsuma M."/>
            <person name="Shiratori A."/>
            <person name="Sudo H."/>
            <person name="Hosoiri T."/>
            <person name="Kaku Y."/>
            <person name="Kodaira H."/>
            <person name="Kondo H."/>
            <person name="Sugawara M."/>
            <person name="Takahashi M."/>
            <person name="Kanda K."/>
            <person name="Yokoi T."/>
            <person name="Furuya T."/>
            <person name="Kikkawa E."/>
            <person name="Omura Y."/>
            <person name="Abe K."/>
            <person name="Kamihara K."/>
            <person name="Katsuta N."/>
            <person name="Sato K."/>
            <person name="Tanikawa M."/>
            <person name="Yamazaki M."/>
            <person name="Ninomiya K."/>
            <person name="Ishibashi T."/>
            <person name="Yamashita H."/>
            <person name="Murakawa K."/>
            <person name="Fujimori K."/>
            <person name="Tanai H."/>
            <person name="Kimata M."/>
            <person name="Watanabe M."/>
            <person name="Hiraoka S."/>
            <person name="Chiba Y."/>
            <person name="Ishida S."/>
            <person name="Ono Y."/>
            <person name="Takiguchi S."/>
            <person name="Watanabe S."/>
            <person name="Yosida M."/>
            <person name="Hotuta T."/>
            <person name="Kusano J."/>
            <person name="Kanehori K."/>
            <person name="Takahashi-Fujii A."/>
            <person name="Hara H."/>
            <person name="Tanase T.-O."/>
            <person name="Nomura Y."/>
            <person name="Togiya S."/>
            <person name="Komai F."/>
            <person name="Hara R."/>
            <person name="Takeuchi K."/>
            <person name="Arita M."/>
            <person name="Imose N."/>
            <person name="Musashino K."/>
            <person name="Yuuki H."/>
            <person name="Oshima A."/>
            <person name="Sasaki N."/>
            <person name="Aotsuka S."/>
            <person name="Yoshikawa Y."/>
            <person name="Matsunawa H."/>
            <person name="Ichihara T."/>
            <person name="Shiohata N."/>
            <person name="Sano S."/>
            <person name="Moriya S."/>
            <person name="Momiyama H."/>
            <person name="Satoh N."/>
            <person name="Takami S."/>
            <person name="Terashima Y."/>
            <person name="Suzuki O."/>
            <person name="Nakagawa S."/>
            <person name="Senoh A."/>
            <person name="Mizoguchi H."/>
            <person name="Goto Y."/>
            <person name="Shimizu F."/>
            <person name="Wakebe H."/>
            <person name="Hishigaki H."/>
            <person name="Watanabe T."/>
            <person name="Sugiyama A."/>
            <person name="Takemoto M."/>
            <person name="Kawakami B."/>
            <person name="Yamazaki M."/>
            <person name="Watanabe K."/>
            <person name="Kumagai A."/>
            <person name="Itakura S."/>
            <person name="Fukuzumi Y."/>
            <person name="Fujimori Y."/>
            <person name="Komiyama M."/>
            <person name="Tashiro H."/>
            <person name="Tanigami A."/>
            <person name="Fujiwara T."/>
            <person name="Ono T."/>
            <person name="Yamada K."/>
            <person name="Fujii Y."/>
            <person name="Ozaki K."/>
            <person name="Hirao M."/>
            <person name="Ohmori Y."/>
            <person name="Kawabata A."/>
            <person name="Hikiji T."/>
            <person name="Kobatake N."/>
            <person name="Inagaki H."/>
            <person name="Ikema Y."/>
            <person name="Okamoto S."/>
            <person name="Okitani R."/>
            <person name="Kawakami T."/>
            <person name="Noguchi S."/>
            <person name="Itoh T."/>
            <person name="Shigeta K."/>
            <person name="Senba T."/>
            <person name="Matsumura K."/>
            <person name="Nakajima Y."/>
            <person name="Mizuno T."/>
            <person name="Morinaga M."/>
            <person name="Sasaki M."/>
            <person name="Togashi T."/>
            <person name="Oyama M."/>
            <person name="Hata H."/>
            <person name="Watanabe M."/>
            <person name="Komatsu T."/>
            <person name="Mizushima-Sugano J."/>
            <person name="Satoh T."/>
            <person name="Shirai Y."/>
            <person name="Takahashi Y."/>
            <person name="Nakagawa K."/>
            <person name="Okumura K."/>
            <person name="Nagase T."/>
            <person name="Nomura N."/>
            <person name="Kikuchi H."/>
            <person name="Masuho Y."/>
            <person name="Yamashita R."/>
            <person name="Nakai K."/>
            <person name="Yada T."/>
            <person name="Nakamura Y."/>
            <person name="Ohara O."/>
            <person name="Isogai T."/>
            <person name="Sugano S."/>
        </authorList>
    </citation>
    <scope>NUCLEOTIDE SEQUENCE [LARGE SCALE MRNA] (ISOFORM 1)</scope>
    <source>
        <tissue>Cerebellum</tissue>
    </source>
</reference>
<reference key="5">
    <citation type="journal article" date="2001" name="Nature">
        <title>The DNA sequence and comparative analysis of human chromosome 20.</title>
        <authorList>
            <person name="Deloukas P."/>
            <person name="Matthews L.H."/>
            <person name="Ashurst J.L."/>
            <person name="Burton J."/>
            <person name="Gilbert J.G.R."/>
            <person name="Jones M."/>
            <person name="Stavrides G."/>
            <person name="Almeida J.P."/>
            <person name="Babbage A.K."/>
            <person name="Bagguley C.L."/>
            <person name="Bailey J."/>
            <person name="Barlow K.F."/>
            <person name="Bates K.N."/>
            <person name="Beard L.M."/>
            <person name="Beare D.M."/>
            <person name="Beasley O.P."/>
            <person name="Bird C.P."/>
            <person name="Blakey S.E."/>
            <person name="Bridgeman A.M."/>
            <person name="Brown A.J."/>
            <person name="Buck D."/>
            <person name="Burrill W.D."/>
            <person name="Butler A.P."/>
            <person name="Carder C."/>
            <person name="Carter N.P."/>
            <person name="Chapman J.C."/>
            <person name="Clamp M."/>
            <person name="Clark G."/>
            <person name="Clark L.N."/>
            <person name="Clark S.Y."/>
            <person name="Clee C.M."/>
            <person name="Clegg S."/>
            <person name="Cobley V.E."/>
            <person name="Collier R.E."/>
            <person name="Connor R.E."/>
            <person name="Corby N.R."/>
            <person name="Coulson A."/>
            <person name="Coville G.J."/>
            <person name="Deadman R."/>
            <person name="Dhami P.D."/>
            <person name="Dunn M."/>
            <person name="Ellington A.G."/>
            <person name="Frankland J.A."/>
            <person name="Fraser A."/>
            <person name="French L."/>
            <person name="Garner P."/>
            <person name="Grafham D.V."/>
            <person name="Griffiths C."/>
            <person name="Griffiths M.N.D."/>
            <person name="Gwilliam R."/>
            <person name="Hall R.E."/>
            <person name="Hammond S."/>
            <person name="Harley J.L."/>
            <person name="Heath P.D."/>
            <person name="Ho S."/>
            <person name="Holden J.L."/>
            <person name="Howden P.J."/>
            <person name="Huckle E."/>
            <person name="Hunt A.R."/>
            <person name="Hunt S.E."/>
            <person name="Jekosch K."/>
            <person name="Johnson C.M."/>
            <person name="Johnson D."/>
            <person name="Kay M.P."/>
            <person name="Kimberley A.M."/>
            <person name="King A."/>
            <person name="Knights A."/>
            <person name="Laird G.K."/>
            <person name="Lawlor S."/>
            <person name="Lehvaeslaiho M.H."/>
            <person name="Leversha M.A."/>
            <person name="Lloyd C."/>
            <person name="Lloyd D.M."/>
            <person name="Lovell J.D."/>
            <person name="Marsh V.L."/>
            <person name="Martin S.L."/>
            <person name="McConnachie L.J."/>
            <person name="McLay K."/>
            <person name="McMurray A.A."/>
            <person name="Milne S.A."/>
            <person name="Mistry D."/>
            <person name="Moore M.J.F."/>
            <person name="Mullikin J.C."/>
            <person name="Nickerson T."/>
            <person name="Oliver K."/>
            <person name="Parker A."/>
            <person name="Patel R."/>
            <person name="Pearce T.A.V."/>
            <person name="Peck A.I."/>
            <person name="Phillimore B.J.C.T."/>
            <person name="Prathalingam S.R."/>
            <person name="Plumb R.W."/>
            <person name="Ramsay H."/>
            <person name="Rice C.M."/>
            <person name="Ross M.T."/>
            <person name="Scott C.E."/>
            <person name="Sehra H.K."/>
            <person name="Shownkeen R."/>
            <person name="Sims S."/>
            <person name="Skuce C.D."/>
            <person name="Smith M.L."/>
            <person name="Soderlund C."/>
            <person name="Steward C.A."/>
            <person name="Sulston J.E."/>
            <person name="Swann R.M."/>
            <person name="Sycamore N."/>
            <person name="Taylor R."/>
            <person name="Tee L."/>
            <person name="Thomas D.W."/>
            <person name="Thorpe A."/>
            <person name="Tracey A."/>
            <person name="Tromans A.C."/>
            <person name="Vaudin M."/>
            <person name="Wall M."/>
            <person name="Wallis J.M."/>
            <person name="Whitehead S.L."/>
            <person name="Whittaker P."/>
            <person name="Willey D.L."/>
            <person name="Williams L."/>
            <person name="Williams S.A."/>
            <person name="Wilming L."/>
            <person name="Wray P.W."/>
            <person name="Hubbard T."/>
            <person name="Durbin R.M."/>
            <person name="Bentley D.R."/>
            <person name="Beck S."/>
            <person name="Rogers J."/>
        </authorList>
    </citation>
    <scope>NUCLEOTIDE SEQUENCE [LARGE SCALE GENOMIC DNA]</scope>
</reference>
<reference key="6">
    <citation type="submission" date="2005-09" db="EMBL/GenBank/DDBJ databases">
        <authorList>
            <person name="Mural R.J."/>
            <person name="Istrail S."/>
            <person name="Sutton G.G."/>
            <person name="Florea L."/>
            <person name="Halpern A.L."/>
            <person name="Mobarry C.M."/>
            <person name="Lippert R."/>
            <person name="Walenz B."/>
            <person name="Shatkay H."/>
            <person name="Dew I."/>
            <person name="Miller J.R."/>
            <person name="Flanigan M.J."/>
            <person name="Edwards N.J."/>
            <person name="Bolanos R."/>
            <person name="Fasulo D."/>
            <person name="Halldorsson B.V."/>
            <person name="Hannenhalli S."/>
            <person name="Turner R."/>
            <person name="Yooseph S."/>
            <person name="Lu F."/>
            <person name="Nusskern D.R."/>
            <person name="Shue B.C."/>
            <person name="Zheng X.H."/>
            <person name="Zhong F."/>
            <person name="Delcher A.L."/>
            <person name="Huson D.H."/>
            <person name="Kravitz S.A."/>
            <person name="Mouchard L."/>
            <person name="Reinert K."/>
            <person name="Remington K.A."/>
            <person name="Clark A.G."/>
            <person name="Waterman M.S."/>
            <person name="Eichler E.E."/>
            <person name="Adams M.D."/>
            <person name="Hunkapiller M.W."/>
            <person name="Myers E.W."/>
            <person name="Venter J.C."/>
        </authorList>
    </citation>
    <scope>NUCLEOTIDE SEQUENCE [LARGE SCALE GENOMIC DNA]</scope>
</reference>
<reference key="7">
    <citation type="journal article" date="2004" name="Genome Res.">
        <title>The status, quality, and expansion of the NIH full-length cDNA project: the Mammalian Gene Collection (MGC).</title>
        <authorList>
            <consortium name="The MGC Project Team"/>
        </authorList>
    </citation>
    <scope>NUCLEOTIDE SEQUENCE [LARGE SCALE MRNA] (ISOFORM 1)</scope>
    <source>
        <tissue>Testis</tissue>
    </source>
</reference>
<reference key="8">
    <citation type="submission" date="2005-06" db="UniProtKB">
        <authorList>
            <person name="Bienvenut W.V."/>
        </authorList>
    </citation>
    <scope>PROTEIN SEQUENCE OF 1-16; 18-26; 32-67; 76-83; 94-109; 138-151; 166-217; 252-268; 282-288; 293-309; 332-371; 373-382; 396-418; 428-440; 446-481; 560-574; 698-736; 769-777; 789-816; 825-832 AND 913-934</scope>
    <scope>ACETYLATION AT MET-1</scope>
    <scope>IDENTIFICATION BY MASS SPECTROMETRY</scope>
    <source>
        <tissue>B-cell lymphoma</tissue>
    </source>
</reference>
<reference key="9">
    <citation type="journal article" date="1997" name="Cell">
        <title>Export of importin-alpha from the nucleus is mediated by a specific nuclear transport factor.</title>
        <authorList>
            <person name="Kutay U."/>
            <person name="Bischoff F.R."/>
            <person name="Kostka S."/>
            <person name="Kraft R."/>
            <person name="Goerlich D."/>
        </authorList>
    </citation>
    <scope>PROTEIN SEQUENCE OF 356-370</scope>
    <scope>FUNCTION IN PROTEIN NUCLEAR EXPORT</scope>
    <scope>IDENTIFICATION IN A COMPLEX WITH RAN AND KPNA2</scope>
    <scope>SUBCELLULAR LOCATION</scope>
</reference>
<reference key="10">
    <citation type="journal article" date="1998" name="J. Cell Biol.">
        <title>Determination of the functional domain organization of the importin alpha nuclear import factor.</title>
        <authorList>
            <person name="Herold A."/>
            <person name="Truant R."/>
            <person name="Wiegand H."/>
            <person name="Cullen B.R."/>
        </authorList>
    </citation>
    <scope>INTERACTION WITH KPNA2</scope>
</reference>
<reference key="11">
    <citation type="journal article" date="2003" name="Nature">
        <title>Proteomic characterization of the human centrosome by protein correlation profiling.</title>
        <authorList>
            <person name="Andersen J.S."/>
            <person name="Wilkinson C.J."/>
            <person name="Mayor T."/>
            <person name="Mortensen P."/>
            <person name="Nigg E.A."/>
            <person name="Mann M."/>
        </authorList>
    </citation>
    <scope>IDENTIFICATION BY MASS SPECTROMETRY</scope>
    <source>
        <tissue>Lymphoblast</tissue>
    </source>
</reference>
<reference key="12">
    <citation type="journal article" date="2009" name="Anal. Chem.">
        <title>Lys-N and trypsin cover complementary parts of the phosphoproteome in a refined SCX-based approach.</title>
        <authorList>
            <person name="Gauci S."/>
            <person name="Helbig A.O."/>
            <person name="Slijper M."/>
            <person name="Krijgsveld J."/>
            <person name="Heck A.J."/>
            <person name="Mohammed S."/>
        </authorList>
    </citation>
    <scope>ACETYLATION [LARGE SCALE ANALYSIS] AT MET-1</scope>
    <scope>IDENTIFICATION BY MASS SPECTROMETRY [LARGE SCALE ANALYSIS]</scope>
</reference>
<reference key="13">
    <citation type="journal article" date="2009" name="Science">
        <title>Lysine acetylation targets protein complexes and co-regulates major cellular functions.</title>
        <authorList>
            <person name="Choudhary C."/>
            <person name="Kumar C."/>
            <person name="Gnad F."/>
            <person name="Nielsen M.L."/>
            <person name="Rehman M."/>
            <person name="Walther T.C."/>
            <person name="Olsen J.V."/>
            <person name="Mann M."/>
        </authorList>
    </citation>
    <scope>ACETYLATION [LARGE SCALE ANALYSIS] AT LYS-574 AND LYS-824</scope>
    <scope>IDENTIFICATION BY MASS SPECTROMETRY [LARGE SCALE ANALYSIS]</scope>
</reference>
<reference key="14">
    <citation type="journal article" date="2010" name="Curr. Biol.">
        <title>Cse1l is a negative regulator of CFTR-dependent fluid secretion.</title>
        <authorList>
            <person name="Bagnat M."/>
            <person name="Navis A."/>
            <person name="Herbstreith S."/>
            <person name="Brand-Arzamendi K."/>
            <person name="Curado S."/>
            <person name="Gabriel S."/>
            <person name="Mostov K."/>
            <person name="Huisken J."/>
            <person name="Stainier D.Y."/>
        </authorList>
    </citation>
    <scope>INTERACTION WITH CFTR</scope>
</reference>
<reference key="15">
    <citation type="journal article" date="2011" name="BMC Syst. Biol.">
        <title>Initial characterization of the human central proteome.</title>
        <authorList>
            <person name="Burkard T.R."/>
            <person name="Planyavsky M."/>
            <person name="Kaupe I."/>
            <person name="Breitwieser F.P."/>
            <person name="Buerckstuemmer T."/>
            <person name="Bennett K.L."/>
            <person name="Superti-Furga G."/>
            <person name="Colinge J."/>
        </authorList>
    </citation>
    <scope>IDENTIFICATION BY MASS SPECTROMETRY [LARGE SCALE ANALYSIS]</scope>
</reference>
<reference key="16">
    <citation type="journal article" date="2012" name="Mol. Cell. Proteomics">
        <title>Comparative large-scale characterisation of plant vs. mammal proteins reveals similar and idiosyncratic N-alpha acetylation features.</title>
        <authorList>
            <person name="Bienvenut W.V."/>
            <person name="Sumpton D."/>
            <person name="Martinez A."/>
            <person name="Lilla S."/>
            <person name="Espagne C."/>
            <person name="Meinnel T."/>
            <person name="Giglione C."/>
        </authorList>
    </citation>
    <scope>ACETYLATION [LARGE SCALE ANALYSIS] AT MET-1</scope>
    <scope>IDENTIFICATION BY MASS SPECTROMETRY [LARGE SCALE ANALYSIS]</scope>
</reference>
<reference key="17">
    <citation type="journal article" date="2012" name="Proc. Natl. Acad. Sci. U.S.A.">
        <title>N-terminal acetylome analyses and functional insights of the N-terminal acetyltransferase NatB.</title>
        <authorList>
            <person name="Van Damme P."/>
            <person name="Lasa M."/>
            <person name="Polevoda B."/>
            <person name="Gazquez C."/>
            <person name="Elosegui-Artola A."/>
            <person name="Kim D.S."/>
            <person name="De Juan-Pardo E."/>
            <person name="Demeyer K."/>
            <person name="Hole K."/>
            <person name="Larrea E."/>
            <person name="Timmerman E."/>
            <person name="Prieto J."/>
            <person name="Arnesen T."/>
            <person name="Sherman F."/>
            <person name="Gevaert K."/>
            <person name="Aldabe R."/>
        </authorList>
    </citation>
    <scope>ACETYLATION [LARGE SCALE ANALYSIS] AT MET-1</scope>
    <scope>IDENTIFICATION BY MASS SPECTROMETRY [LARGE SCALE ANALYSIS]</scope>
</reference>
<reference key="18">
    <citation type="journal article" date="2013" name="J. Proteome Res.">
        <title>Toward a comprehensive characterization of a human cancer cell phosphoproteome.</title>
        <authorList>
            <person name="Zhou H."/>
            <person name="Di Palma S."/>
            <person name="Preisinger C."/>
            <person name="Peng M."/>
            <person name="Polat A.N."/>
            <person name="Heck A.J."/>
            <person name="Mohammed S."/>
        </authorList>
    </citation>
    <scope>PHOSPHORYLATION [LARGE SCALE ANALYSIS] AT SER-112 AND SER-931</scope>
    <scope>IDENTIFICATION BY MASS SPECTROMETRY [LARGE SCALE ANALYSIS]</scope>
    <source>
        <tissue>Cervix carcinoma</tissue>
        <tissue>Erythroleukemia</tissue>
    </source>
</reference>
<reference key="19">
    <citation type="journal article" date="2014" name="J. Proteomics">
        <title>An enzyme assisted RP-RPLC approach for in-depth analysis of human liver phosphoproteome.</title>
        <authorList>
            <person name="Bian Y."/>
            <person name="Song C."/>
            <person name="Cheng K."/>
            <person name="Dong M."/>
            <person name="Wang F."/>
            <person name="Huang J."/>
            <person name="Sun D."/>
            <person name="Wang L."/>
            <person name="Ye M."/>
            <person name="Zou H."/>
        </authorList>
    </citation>
    <scope>PHOSPHORYLATION [LARGE SCALE ANALYSIS] AT SER-931</scope>
    <scope>IDENTIFICATION BY MASS SPECTROMETRY [LARGE SCALE ANALYSIS]</scope>
    <source>
        <tissue>Liver</tissue>
    </source>
</reference>
<reference key="20">
    <citation type="journal article" date="2015" name="Proteomics">
        <title>N-terminome analysis of the human mitochondrial proteome.</title>
        <authorList>
            <person name="Vaca Jacome A.S."/>
            <person name="Rabilloud T."/>
            <person name="Schaeffer-Reiss C."/>
            <person name="Rompais M."/>
            <person name="Ayoub D."/>
            <person name="Lane L."/>
            <person name="Bairoch A."/>
            <person name="Van Dorsselaer A."/>
            <person name="Carapito C."/>
        </authorList>
    </citation>
    <scope>IDENTIFICATION BY MASS SPECTROMETRY [LARGE SCALE ANALYSIS]</scope>
</reference>
<reference key="21">
    <citation type="journal article" date="2006" name="Science">
        <title>The consensus coding sequences of human breast and colorectal cancers.</title>
        <authorList>
            <person name="Sjoeblom T."/>
            <person name="Jones S."/>
            <person name="Wood L.D."/>
            <person name="Parsons D.W."/>
            <person name="Lin J."/>
            <person name="Barber T.D."/>
            <person name="Mandelker D."/>
            <person name="Leary R.J."/>
            <person name="Ptak J."/>
            <person name="Silliman N."/>
            <person name="Szabo S."/>
            <person name="Buckhaults P."/>
            <person name="Farrell C."/>
            <person name="Meeh P."/>
            <person name="Markowitz S.D."/>
            <person name="Willis J."/>
            <person name="Dawson D."/>
            <person name="Willson J.K.V."/>
            <person name="Gazdar A.F."/>
            <person name="Hartigan J."/>
            <person name="Wu L."/>
            <person name="Liu C."/>
            <person name="Parmigiani G."/>
            <person name="Park B.H."/>
            <person name="Bachman K.E."/>
            <person name="Papadopoulos N."/>
            <person name="Vogelstein B."/>
            <person name="Kinzler K.W."/>
            <person name="Velculescu V.E."/>
        </authorList>
    </citation>
    <scope>VARIANT [LARGE SCALE ANALYSIS] PHE-842</scope>
</reference>
<protein>
    <recommendedName>
        <fullName>Exportin-2</fullName>
        <shortName>Exp2</shortName>
    </recommendedName>
    <alternativeName>
        <fullName evidence="11">Cellular apoptosis susceptibility protein</fullName>
    </alternativeName>
    <alternativeName>
        <fullName>Chromosome segregation 1-like protein</fullName>
    </alternativeName>
    <alternativeName>
        <fullName>Importin-alpha re-exporter</fullName>
    </alternativeName>
</protein>
<organism>
    <name type="scientific">Homo sapiens</name>
    <name type="common">Human</name>
    <dbReference type="NCBI Taxonomy" id="9606"/>
    <lineage>
        <taxon>Eukaryota</taxon>
        <taxon>Metazoa</taxon>
        <taxon>Chordata</taxon>
        <taxon>Craniata</taxon>
        <taxon>Vertebrata</taxon>
        <taxon>Euteleostomi</taxon>
        <taxon>Mammalia</taxon>
        <taxon>Eutheria</taxon>
        <taxon>Euarchontoglires</taxon>
        <taxon>Primates</taxon>
        <taxon>Haplorrhini</taxon>
        <taxon>Catarrhini</taxon>
        <taxon>Hominidae</taxon>
        <taxon>Homo</taxon>
    </lineage>
</organism>
<dbReference type="EMBL" id="U33286">
    <property type="protein sequence ID" value="AAC50367.1"/>
    <property type="molecule type" value="mRNA"/>
</dbReference>
<dbReference type="EMBL" id="AF053640">
    <property type="protein sequence ID" value="AAC35007.1"/>
    <property type="molecule type" value="mRNA"/>
</dbReference>
<dbReference type="EMBL" id="AF053641">
    <property type="protein sequence ID" value="AAC35008.1"/>
    <property type="molecule type" value="mRNA"/>
</dbReference>
<dbReference type="EMBL" id="AF053642">
    <property type="protein sequence ID" value="AAC35009.1"/>
    <property type="molecule type" value="mRNA"/>
</dbReference>
<dbReference type="EMBL" id="AF053651">
    <property type="protein sequence ID" value="AAC35297.1"/>
    <property type="molecule type" value="Genomic_DNA"/>
</dbReference>
<dbReference type="EMBL" id="AF053644">
    <property type="protein sequence ID" value="AAC35297.1"/>
    <property type="status" value="JOINED"/>
    <property type="molecule type" value="Genomic_DNA"/>
</dbReference>
<dbReference type="EMBL" id="AF053645">
    <property type="protein sequence ID" value="AAC35297.1"/>
    <property type="status" value="JOINED"/>
    <property type="molecule type" value="Genomic_DNA"/>
</dbReference>
<dbReference type="EMBL" id="AF053646">
    <property type="protein sequence ID" value="AAC35297.1"/>
    <property type="status" value="JOINED"/>
    <property type="molecule type" value="Genomic_DNA"/>
</dbReference>
<dbReference type="EMBL" id="AF053647">
    <property type="protein sequence ID" value="AAC35297.1"/>
    <property type="status" value="JOINED"/>
    <property type="molecule type" value="Genomic_DNA"/>
</dbReference>
<dbReference type="EMBL" id="AF053648">
    <property type="protein sequence ID" value="AAC35297.1"/>
    <property type="status" value="JOINED"/>
    <property type="molecule type" value="Genomic_DNA"/>
</dbReference>
<dbReference type="EMBL" id="AF053649">
    <property type="protein sequence ID" value="AAC35297.1"/>
    <property type="status" value="JOINED"/>
    <property type="molecule type" value="Genomic_DNA"/>
</dbReference>
<dbReference type="EMBL" id="AF053650">
    <property type="protein sequence ID" value="AAC35297.1"/>
    <property type="status" value="JOINED"/>
    <property type="molecule type" value="Genomic_DNA"/>
</dbReference>
<dbReference type="EMBL" id="EF426455">
    <property type="protein sequence ID" value="ABO15009.1"/>
    <property type="molecule type" value="mRNA"/>
</dbReference>
<dbReference type="EMBL" id="AK312306">
    <property type="protein sequence ID" value="BAG35231.1"/>
    <property type="molecule type" value="mRNA"/>
</dbReference>
<dbReference type="EMBL" id="AL121903">
    <property type="status" value="NOT_ANNOTATED_CDS"/>
    <property type="molecule type" value="Genomic_DNA"/>
</dbReference>
<dbReference type="EMBL" id="AL133174">
    <property type="status" value="NOT_ANNOTATED_CDS"/>
    <property type="molecule type" value="Genomic_DNA"/>
</dbReference>
<dbReference type="EMBL" id="CH471077">
    <property type="protein sequence ID" value="EAW75676.1"/>
    <property type="molecule type" value="Genomic_DNA"/>
</dbReference>
<dbReference type="EMBL" id="CH471077">
    <property type="protein sequence ID" value="EAW75677.1"/>
    <property type="molecule type" value="Genomic_DNA"/>
</dbReference>
<dbReference type="EMBL" id="BC108309">
    <property type="protein sequence ID" value="AAI08310.1"/>
    <property type="molecule type" value="mRNA"/>
</dbReference>
<dbReference type="EMBL" id="BC109313">
    <property type="protein sequence ID" value="AAI09314.1"/>
    <property type="molecule type" value="mRNA"/>
</dbReference>
<dbReference type="EMBL" id="BC109314">
    <property type="protein sequence ID" value="AAI09315.1"/>
    <property type="molecule type" value="mRNA"/>
</dbReference>
<dbReference type="CCDS" id="CCDS13412.1">
    <molecule id="P55060-1"/>
</dbReference>
<dbReference type="CCDS" id="CCDS58773.1">
    <molecule id="P55060-4"/>
</dbReference>
<dbReference type="PIR" id="I39166">
    <property type="entry name" value="I39166"/>
</dbReference>
<dbReference type="RefSeq" id="NP_001243064.1">
    <molecule id="P55060-4"/>
    <property type="nucleotide sequence ID" value="NM_001256135.2"/>
</dbReference>
<dbReference type="RefSeq" id="NP_001307.2">
    <molecule id="P55060-1"/>
    <property type="nucleotide sequence ID" value="NM_001316.3"/>
</dbReference>
<dbReference type="RefSeq" id="NP_001349691.1">
    <molecule id="P55060-3"/>
    <property type="nucleotide sequence ID" value="NM_001362762.2"/>
</dbReference>
<dbReference type="RefSeq" id="XP_011526901.1">
    <property type="nucleotide sequence ID" value="XM_011528599.2"/>
</dbReference>
<dbReference type="SMR" id="P55060"/>
<dbReference type="BioGRID" id="107821">
    <property type="interactions" value="333"/>
</dbReference>
<dbReference type="CORUM" id="P55060"/>
<dbReference type="DIP" id="DIP-32573N"/>
<dbReference type="FunCoup" id="P55060">
    <property type="interactions" value="3821"/>
</dbReference>
<dbReference type="IntAct" id="P55060">
    <property type="interactions" value="116"/>
</dbReference>
<dbReference type="MINT" id="P55060"/>
<dbReference type="STRING" id="9606.ENSP00000262982"/>
<dbReference type="TCDB" id="1.I.1.1.3">
    <property type="family name" value="the nuclear pore complex (npc) family"/>
</dbReference>
<dbReference type="GlyGen" id="P55060">
    <property type="glycosylation" value="1 site, 1 O-linked glycan (1 site)"/>
</dbReference>
<dbReference type="iPTMnet" id="P55060"/>
<dbReference type="MetOSite" id="P55060"/>
<dbReference type="PhosphoSitePlus" id="P55060"/>
<dbReference type="SwissPalm" id="P55060"/>
<dbReference type="BioMuta" id="CSE1L"/>
<dbReference type="DMDM" id="62297557"/>
<dbReference type="jPOST" id="P55060"/>
<dbReference type="MassIVE" id="P55060"/>
<dbReference type="PaxDb" id="9606-ENSP00000262982"/>
<dbReference type="PeptideAtlas" id="P55060"/>
<dbReference type="ProteomicsDB" id="30232"/>
<dbReference type="ProteomicsDB" id="56771">
    <molecule id="P55060-1"/>
</dbReference>
<dbReference type="ProteomicsDB" id="56772">
    <molecule id="P55060-2"/>
</dbReference>
<dbReference type="ProteomicsDB" id="56773">
    <molecule id="P55060-3"/>
</dbReference>
<dbReference type="Pumba" id="P55060"/>
<dbReference type="Antibodypedia" id="28372">
    <property type="antibodies" value="555 antibodies from 40 providers"/>
</dbReference>
<dbReference type="DNASU" id="1434"/>
<dbReference type="Ensembl" id="ENST00000262982.3">
    <molecule id="P55060-1"/>
    <property type="protein sequence ID" value="ENSP00000262982.2"/>
    <property type="gene ID" value="ENSG00000124207.17"/>
</dbReference>
<dbReference type="Ensembl" id="ENST00000396192.7">
    <molecule id="P55060-4"/>
    <property type="protein sequence ID" value="ENSP00000379495.3"/>
    <property type="gene ID" value="ENSG00000124207.17"/>
</dbReference>
<dbReference type="GeneID" id="1434"/>
<dbReference type="KEGG" id="hsa:1434"/>
<dbReference type="MANE-Select" id="ENST00000262982.3">
    <property type="protein sequence ID" value="ENSP00000262982.2"/>
    <property type="RefSeq nucleotide sequence ID" value="NM_001316.4"/>
    <property type="RefSeq protein sequence ID" value="NP_001307.2"/>
</dbReference>
<dbReference type="UCSC" id="uc002xty.5">
    <molecule id="P55060-1"/>
    <property type="organism name" value="human"/>
</dbReference>
<dbReference type="AGR" id="HGNC:2431"/>
<dbReference type="CTD" id="1434"/>
<dbReference type="DisGeNET" id="1434"/>
<dbReference type="GeneCards" id="CSE1L"/>
<dbReference type="HGNC" id="HGNC:2431">
    <property type="gene designation" value="CSE1L"/>
</dbReference>
<dbReference type="HPA" id="ENSG00000124207">
    <property type="expression patterns" value="Low tissue specificity"/>
</dbReference>
<dbReference type="MIM" id="601342">
    <property type="type" value="gene"/>
</dbReference>
<dbReference type="neXtProt" id="NX_P55060"/>
<dbReference type="OpenTargets" id="ENSG00000124207"/>
<dbReference type="PharmGKB" id="PA26933"/>
<dbReference type="VEuPathDB" id="HostDB:ENSG00000124207"/>
<dbReference type="eggNOG" id="KOG1992">
    <property type="taxonomic scope" value="Eukaryota"/>
</dbReference>
<dbReference type="GeneTree" id="ENSGT00550000074884"/>
<dbReference type="HOGENOM" id="CLU_009614_0_0_1"/>
<dbReference type="InParanoid" id="P55060"/>
<dbReference type="OMA" id="AENEFLM"/>
<dbReference type="OrthoDB" id="3268246at2759"/>
<dbReference type="PAN-GO" id="P55060">
    <property type="GO annotations" value="5 GO annotations based on evolutionary models"/>
</dbReference>
<dbReference type="PhylomeDB" id="P55060"/>
<dbReference type="TreeFam" id="TF300473"/>
<dbReference type="PathwayCommons" id="P55060"/>
<dbReference type="SignaLink" id="P55060"/>
<dbReference type="SIGNOR" id="P55060"/>
<dbReference type="BioGRID-ORCS" id="1434">
    <property type="hits" value="836 hits in 1166 CRISPR screens"/>
</dbReference>
<dbReference type="CD-CODE" id="91857CE7">
    <property type="entry name" value="Nucleolus"/>
</dbReference>
<dbReference type="CD-CODE" id="DEE660B4">
    <property type="entry name" value="Stress granule"/>
</dbReference>
<dbReference type="CD-CODE" id="FB4E32DD">
    <property type="entry name" value="Presynaptic clusters and postsynaptic densities"/>
</dbReference>
<dbReference type="ChiTaRS" id="CSE1L">
    <property type="organism name" value="human"/>
</dbReference>
<dbReference type="GenomeRNAi" id="1434"/>
<dbReference type="Pharos" id="P55060">
    <property type="development level" value="Tbio"/>
</dbReference>
<dbReference type="PRO" id="PR:P55060"/>
<dbReference type="Proteomes" id="UP000005640">
    <property type="component" value="Chromosome 20"/>
</dbReference>
<dbReference type="RNAct" id="P55060">
    <property type="molecule type" value="protein"/>
</dbReference>
<dbReference type="Bgee" id="ENSG00000124207">
    <property type="expression patterns" value="Expressed in primordial germ cell in gonad and 219 other cell types or tissues"/>
</dbReference>
<dbReference type="ExpressionAtlas" id="P55060">
    <property type="expression patterns" value="baseline and differential"/>
</dbReference>
<dbReference type="GO" id="GO:0005737">
    <property type="term" value="C:cytoplasm"/>
    <property type="evidence" value="ECO:0000304"/>
    <property type="project" value="ProtInc"/>
</dbReference>
<dbReference type="GO" id="GO:0005829">
    <property type="term" value="C:cytosol"/>
    <property type="evidence" value="ECO:0000314"/>
    <property type="project" value="HPA"/>
</dbReference>
<dbReference type="GO" id="GO:0070062">
    <property type="term" value="C:extracellular exosome"/>
    <property type="evidence" value="ECO:0007005"/>
    <property type="project" value="UniProtKB"/>
</dbReference>
<dbReference type="GO" id="GO:0016020">
    <property type="term" value="C:membrane"/>
    <property type="evidence" value="ECO:0007005"/>
    <property type="project" value="UniProtKB"/>
</dbReference>
<dbReference type="GO" id="GO:0005635">
    <property type="term" value="C:nuclear envelope"/>
    <property type="evidence" value="ECO:0000318"/>
    <property type="project" value="GO_Central"/>
</dbReference>
<dbReference type="GO" id="GO:0005654">
    <property type="term" value="C:nucleoplasm"/>
    <property type="evidence" value="ECO:0000314"/>
    <property type="project" value="HPA"/>
</dbReference>
<dbReference type="GO" id="GO:0005634">
    <property type="term" value="C:nucleus"/>
    <property type="evidence" value="ECO:0000304"/>
    <property type="project" value="ProtInc"/>
</dbReference>
<dbReference type="GO" id="GO:0005049">
    <property type="term" value="F:nuclear export signal receptor activity"/>
    <property type="evidence" value="ECO:0000318"/>
    <property type="project" value="GO_Central"/>
</dbReference>
<dbReference type="GO" id="GO:0031267">
    <property type="term" value="F:small GTPase binding"/>
    <property type="evidence" value="ECO:0007669"/>
    <property type="project" value="InterPro"/>
</dbReference>
<dbReference type="GO" id="GO:0006611">
    <property type="term" value="P:protein export from nucleus"/>
    <property type="evidence" value="ECO:0000318"/>
    <property type="project" value="GO_Central"/>
</dbReference>
<dbReference type="GO" id="GO:0006606">
    <property type="term" value="P:protein import into nucleus"/>
    <property type="evidence" value="ECO:0000318"/>
    <property type="project" value="GO_Central"/>
</dbReference>
<dbReference type="FunFam" id="1.25.10.10:FF:000057">
    <property type="entry name" value="Exportin-2 isoform 1"/>
    <property type="match status" value="1"/>
</dbReference>
<dbReference type="Gene3D" id="1.25.10.10">
    <property type="entry name" value="Leucine-rich Repeat Variant"/>
    <property type="match status" value="1"/>
</dbReference>
<dbReference type="InterPro" id="IPR011989">
    <property type="entry name" value="ARM-like"/>
</dbReference>
<dbReference type="InterPro" id="IPR016024">
    <property type="entry name" value="ARM-type_fold"/>
</dbReference>
<dbReference type="InterPro" id="IPR001494">
    <property type="entry name" value="Importin-beta_N"/>
</dbReference>
<dbReference type="InterPro" id="IPR005043">
    <property type="entry name" value="XPO2_C"/>
</dbReference>
<dbReference type="InterPro" id="IPR013713">
    <property type="entry name" value="XPO2_central"/>
</dbReference>
<dbReference type="PANTHER" id="PTHR10997:SF8">
    <property type="entry name" value="EXPORTIN-2"/>
    <property type="match status" value="1"/>
</dbReference>
<dbReference type="PANTHER" id="PTHR10997">
    <property type="entry name" value="IMPORTIN-7, 8, 11"/>
    <property type="match status" value="1"/>
</dbReference>
<dbReference type="Pfam" id="PF03378">
    <property type="entry name" value="CAS_CSE1"/>
    <property type="match status" value="1"/>
</dbReference>
<dbReference type="Pfam" id="PF08506">
    <property type="entry name" value="Cse1"/>
    <property type="match status" value="1"/>
</dbReference>
<dbReference type="Pfam" id="PF03810">
    <property type="entry name" value="IBN_N"/>
    <property type="match status" value="1"/>
</dbReference>
<dbReference type="SMART" id="SM00913">
    <property type="entry name" value="IBN_N"/>
    <property type="match status" value="1"/>
</dbReference>
<dbReference type="SUPFAM" id="SSF48371">
    <property type="entry name" value="ARM repeat"/>
    <property type="match status" value="1"/>
</dbReference>
<dbReference type="PROSITE" id="PS50166">
    <property type="entry name" value="IMPORTIN_B_NT"/>
    <property type="match status" value="1"/>
</dbReference>
<accession>P55060</accession>
<accession>A3RLL6</accession>
<accession>B2R5T4</accession>
<accession>E1P5Y0</accession>
<accession>F8W904</accession>
<accession>O75432</accession>
<accession>Q32M40</accession>
<accession>Q9H5B7</accession>
<accession>Q9NTS0</accession>
<accession>Q9UP98</accession>
<accession>Q9UP99</accession>
<accession>Q9UPA0</accession>
<name>XPO2_HUMAN</name>
<proteinExistence type="evidence at protein level"/>